<protein>
    <recommendedName>
        <fullName evidence="1">Leucine--tRNA ligase</fullName>
        <ecNumber evidence="1">6.1.1.4</ecNumber>
    </recommendedName>
    <alternativeName>
        <fullName evidence="1">Leucyl-tRNA synthetase</fullName>
        <shortName evidence="1">LeuRS</shortName>
    </alternativeName>
</protein>
<evidence type="ECO:0000255" key="1">
    <source>
        <dbReference type="HAMAP-Rule" id="MF_00049"/>
    </source>
</evidence>
<proteinExistence type="inferred from homology"/>
<sequence>MISPDKRYEADTNLYNPSEIEKKWQSIWTENNLYKTDELTENSDKFYALSMFPYPSGNLHMGHVRNYVITDLIARFQRFKGKSVLHPMGWDAFGLPAENAAIERGISPSVWTKKNISHMKSQLKLLGLSVDWDREFATCDENYYIWTQYLFLELYKSGLVYQKESEVNWDPIDNTVLANEQVDSEGKSWRSGAVVEKKLLKQWFLRITNYADELLKDLEKLDNWPERVKIMQDNWIGKSIGANINFNINTNPEKNITVFTTRPDTLFGVTYLAISVNHSLIKKITDQETIQDIENLKQYLKDNKNNELEKIGIKTSLIAINPVNSEPIPIWVASYVLDEYGTGAVMGVPAHDLRDFEFAKKNNIDIKQVIVKDKSEQSNELDNAYVENGYLINSNHYNGLANTIAKLKIAEEGVNNGWAENKIQYRLRDWLISRQRYWGCPIPIVNCKKCGAVPLNQSDLPVSLPKDIEISANKINALGNNNDWINTTCPKCGIGARKETDTMDTFMCSSWYFLRYPSSKCSTKPFEKNEINKWLPVDQYVGGVEHAILHLLYARFFTKALRDNELFDIDEPFKKLLTQGMVQSAAYKNNKTGKYVSPSDITDLSNPTDPIDNSKLEVLFEKMSKSKYNGIDPESVIKKYGADTARMFILFKAPPEKDLEWGDTDVEGQFRFLSRIWKLYINCAKNINSKSNSHPDKEKSLIKSMNIAIKEISNDILNNQFNTAISELMKFYNSLSNSINDINNNLKIDALKTFCILLAPFAPHIAEEIWHLIGFKKSVHLEHWPSFNAEALKEDSYELVIQVNGKVRDKVNINNDMSEDQIKELTLKRPNILKWTQDKEIRKIIIVKGKIMNIVV</sequence>
<keyword id="KW-0030">Aminoacyl-tRNA synthetase</keyword>
<keyword id="KW-0067">ATP-binding</keyword>
<keyword id="KW-0963">Cytoplasm</keyword>
<keyword id="KW-0436">Ligase</keyword>
<keyword id="KW-0547">Nucleotide-binding</keyword>
<keyword id="KW-0648">Protein biosynthesis</keyword>
<feature type="chain" id="PRO_1000009395" description="Leucine--tRNA ligase">
    <location>
        <begin position="1"/>
        <end position="856"/>
    </location>
</feature>
<feature type="short sequence motif" description="'HIGH' region">
    <location>
        <begin position="53"/>
        <end position="63"/>
    </location>
</feature>
<feature type="short sequence motif" description="'KMSKS' region">
    <location>
        <begin position="622"/>
        <end position="626"/>
    </location>
</feature>
<feature type="binding site" evidence="1">
    <location>
        <position position="625"/>
    </location>
    <ligand>
        <name>ATP</name>
        <dbReference type="ChEBI" id="CHEBI:30616"/>
    </ligand>
</feature>
<organism>
    <name type="scientific">Prochlorococcus marinus (strain AS9601)</name>
    <dbReference type="NCBI Taxonomy" id="146891"/>
    <lineage>
        <taxon>Bacteria</taxon>
        <taxon>Bacillati</taxon>
        <taxon>Cyanobacteriota</taxon>
        <taxon>Cyanophyceae</taxon>
        <taxon>Synechococcales</taxon>
        <taxon>Prochlorococcaceae</taxon>
        <taxon>Prochlorococcus</taxon>
    </lineage>
</organism>
<comment type="catalytic activity">
    <reaction evidence="1">
        <text>tRNA(Leu) + L-leucine + ATP = L-leucyl-tRNA(Leu) + AMP + diphosphate</text>
        <dbReference type="Rhea" id="RHEA:11688"/>
        <dbReference type="Rhea" id="RHEA-COMP:9613"/>
        <dbReference type="Rhea" id="RHEA-COMP:9622"/>
        <dbReference type="ChEBI" id="CHEBI:30616"/>
        <dbReference type="ChEBI" id="CHEBI:33019"/>
        <dbReference type="ChEBI" id="CHEBI:57427"/>
        <dbReference type="ChEBI" id="CHEBI:78442"/>
        <dbReference type="ChEBI" id="CHEBI:78494"/>
        <dbReference type="ChEBI" id="CHEBI:456215"/>
        <dbReference type="EC" id="6.1.1.4"/>
    </reaction>
</comment>
<comment type="subcellular location">
    <subcellularLocation>
        <location evidence="1">Cytoplasm</location>
    </subcellularLocation>
</comment>
<comment type="similarity">
    <text evidence="1">Belongs to the class-I aminoacyl-tRNA synthetase family.</text>
</comment>
<accession>A2BR45</accession>
<reference key="1">
    <citation type="journal article" date="2007" name="PLoS Genet.">
        <title>Patterns and implications of gene gain and loss in the evolution of Prochlorococcus.</title>
        <authorList>
            <person name="Kettler G.C."/>
            <person name="Martiny A.C."/>
            <person name="Huang K."/>
            <person name="Zucker J."/>
            <person name="Coleman M.L."/>
            <person name="Rodrigue S."/>
            <person name="Chen F."/>
            <person name="Lapidus A."/>
            <person name="Ferriera S."/>
            <person name="Johnson J."/>
            <person name="Steglich C."/>
            <person name="Church G.M."/>
            <person name="Richardson P."/>
            <person name="Chisholm S.W."/>
        </authorList>
    </citation>
    <scope>NUCLEOTIDE SEQUENCE [LARGE SCALE GENOMIC DNA]</scope>
    <source>
        <strain>AS9601</strain>
    </source>
</reference>
<gene>
    <name evidence="1" type="primary">leuS</name>
    <name type="ordered locus">A9601_09721</name>
</gene>
<dbReference type="EC" id="6.1.1.4" evidence="1"/>
<dbReference type="EMBL" id="CP000551">
    <property type="protein sequence ID" value="ABM70256.1"/>
    <property type="molecule type" value="Genomic_DNA"/>
</dbReference>
<dbReference type="RefSeq" id="WP_011818411.1">
    <property type="nucleotide sequence ID" value="NC_008816.1"/>
</dbReference>
<dbReference type="SMR" id="A2BR45"/>
<dbReference type="STRING" id="146891.A9601_09721"/>
<dbReference type="KEGG" id="pmb:A9601_09721"/>
<dbReference type="eggNOG" id="COG0495">
    <property type="taxonomic scope" value="Bacteria"/>
</dbReference>
<dbReference type="HOGENOM" id="CLU_004427_0_0_3"/>
<dbReference type="OrthoDB" id="9810365at2"/>
<dbReference type="Proteomes" id="UP000002590">
    <property type="component" value="Chromosome"/>
</dbReference>
<dbReference type="GO" id="GO:0005829">
    <property type="term" value="C:cytosol"/>
    <property type="evidence" value="ECO:0007669"/>
    <property type="project" value="TreeGrafter"/>
</dbReference>
<dbReference type="GO" id="GO:0002161">
    <property type="term" value="F:aminoacyl-tRNA deacylase activity"/>
    <property type="evidence" value="ECO:0007669"/>
    <property type="project" value="InterPro"/>
</dbReference>
<dbReference type="GO" id="GO:0005524">
    <property type="term" value="F:ATP binding"/>
    <property type="evidence" value="ECO:0007669"/>
    <property type="project" value="UniProtKB-UniRule"/>
</dbReference>
<dbReference type="GO" id="GO:0004823">
    <property type="term" value="F:leucine-tRNA ligase activity"/>
    <property type="evidence" value="ECO:0007669"/>
    <property type="project" value="UniProtKB-UniRule"/>
</dbReference>
<dbReference type="GO" id="GO:0006429">
    <property type="term" value="P:leucyl-tRNA aminoacylation"/>
    <property type="evidence" value="ECO:0007669"/>
    <property type="project" value="UniProtKB-UniRule"/>
</dbReference>
<dbReference type="CDD" id="cd07958">
    <property type="entry name" value="Anticodon_Ia_Leu_BEm"/>
    <property type="match status" value="1"/>
</dbReference>
<dbReference type="CDD" id="cd00812">
    <property type="entry name" value="LeuRS_core"/>
    <property type="match status" value="1"/>
</dbReference>
<dbReference type="FunFam" id="3.40.50.620:FF:000003">
    <property type="entry name" value="Leucine--tRNA ligase"/>
    <property type="match status" value="1"/>
</dbReference>
<dbReference type="FunFam" id="3.40.50.620:FF:000056">
    <property type="entry name" value="Leucine--tRNA ligase"/>
    <property type="match status" value="1"/>
</dbReference>
<dbReference type="FunFam" id="1.10.730.10:FF:000011">
    <property type="entry name" value="Leucine--tRNA ligase chloroplastic/mitochondrial"/>
    <property type="match status" value="1"/>
</dbReference>
<dbReference type="Gene3D" id="3.40.50.620">
    <property type="entry name" value="HUPs"/>
    <property type="match status" value="2"/>
</dbReference>
<dbReference type="Gene3D" id="1.10.730.10">
    <property type="entry name" value="Isoleucyl-tRNA Synthetase, Domain 1"/>
    <property type="match status" value="1"/>
</dbReference>
<dbReference type="HAMAP" id="MF_00049_B">
    <property type="entry name" value="Leu_tRNA_synth_B"/>
    <property type="match status" value="1"/>
</dbReference>
<dbReference type="InterPro" id="IPR001412">
    <property type="entry name" value="aa-tRNA-synth_I_CS"/>
</dbReference>
<dbReference type="InterPro" id="IPR002300">
    <property type="entry name" value="aa-tRNA-synth_Ia"/>
</dbReference>
<dbReference type="InterPro" id="IPR002302">
    <property type="entry name" value="Leu-tRNA-ligase"/>
</dbReference>
<dbReference type="InterPro" id="IPR025709">
    <property type="entry name" value="Leu_tRNA-synth_edit"/>
</dbReference>
<dbReference type="InterPro" id="IPR013155">
    <property type="entry name" value="M/V/L/I-tRNA-synth_anticd-bd"/>
</dbReference>
<dbReference type="InterPro" id="IPR015413">
    <property type="entry name" value="Methionyl/Leucyl_tRNA_Synth"/>
</dbReference>
<dbReference type="InterPro" id="IPR014729">
    <property type="entry name" value="Rossmann-like_a/b/a_fold"/>
</dbReference>
<dbReference type="InterPro" id="IPR009080">
    <property type="entry name" value="tRNAsynth_Ia_anticodon-bd"/>
</dbReference>
<dbReference type="InterPro" id="IPR009008">
    <property type="entry name" value="Val/Leu/Ile-tRNA-synth_edit"/>
</dbReference>
<dbReference type="NCBIfam" id="TIGR00396">
    <property type="entry name" value="leuS_bact"/>
    <property type="match status" value="1"/>
</dbReference>
<dbReference type="PANTHER" id="PTHR43740:SF2">
    <property type="entry name" value="LEUCINE--TRNA LIGASE, MITOCHONDRIAL"/>
    <property type="match status" value="1"/>
</dbReference>
<dbReference type="PANTHER" id="PTHR43740">
    <property type="entry name" value="LEUCYL-TRNA SYNTHETASE"/>
    <property type="match status" value="1"/>
</dbReference>
<dbReference type="Pfam" id="PF08264">
    <property type="entry name" value="Anticodon_1"/>
    <property type="match status" value="1"/>
</dbReference>
<dbReference type="Pfam" id="PF00133">
    <property type="entry name" value="tRNA-synt_1"/>
    <property type="match status" value="2"/>
</dbReference>
<dbReference type="Pfam" id="PF13603">
    <property type="entry name" value="tRNA-synt_1_2"/>
    <property type="match status" value="1"/>
</dbReference>
<dbReference type="Pfam" id="PF09334">
    <property type="entry name" value="tRNA-synt_1g"/>
    <property type="match status" value="1"/>
</dbReference>
<dbReference type="PRINTS" id="PR00985">
    <property type="entry name" value="TRNASYNTHLEU"/>
</dbReference>
<dbReference type="SUPFAM" id="SSF47323">
    <property type="entry name" value="Anticodon-binding domain of a subclass of class I aminoacyl-tRNA synthetases"/>
    <property type="match status" value="1"/>
</dbReference>
<dbReference type="SUPFAM" id="SSF52374">
    <property type="entry name" value="Nucleotidylyl transferase"/>
    <property type="match status" value="1"/>
</dbReference>
<dbReference type="SUPFAM" id="SSF50677">
    <property type="entry name" value="ValRS/IleRS/LeuRS editing domain"/>
    <property type="match status" value="1"/>
</dbReference>
<dbReference type="PROSITE" id="PS00178">
    <property type="entry name" value="AA_TRNA_LIGASE_I"/>
    <property type="match status" value="1"/>
</dbReference>
<name>SYL_PROMS</name>